<gene>
    <name evidence="1" type="primary">yqgF</name>
    <name type="ordered locus">BWG_2671</name>
</gene>
<organism>
    <name type="scientific">Escherichia coli (strain K12 / MC4100 / BW2952)</name>
    <dbReference type="NCBI Taxonomy" id="595496"/>
    <lineage>
        <taxon>Bacteria</taxon>
        <taxon>Pseudomonadati</taxon>
        <taxon>Pseudomonadota</taxon>
        <taxon>Gammaproteobacteria</taxon>
        <taxon>Enterobacterales</taxon>
        <taxon>Enterobacteriaceae</taxon>
        <taxon>Escherichia</taxon>
    </lineage>
</organism>
<comment type="function">
    <text evidence="1">Could be a nuclease involved in processing of the 5'-end of pre-16S rRNA.</text>
</comment>
<comment type="subcellular location">
    <subcellularLocation>
        <location evidence="1">Cytoplasm</location>
    </subcellularLocation>
</comment>
<comment type="similarity">
    <text evidence="1">Belongs to the YqgF nuclease family.</text>
</comment>
<sequence length="138" mass="15186">MSGTLLAFDFGTKSIGVAVGQRITGTARPLPAIKAQDGTPDWNIIERLLKEWQPDEIIVGLPLNMDGTEQPLTARARKFANRIHGRFGVEVKLHDERLSTVEARSGLFEQGGYRALNKGKVDSASAVIILESYFEQGY</sequence>
<proteinExistence type="inferred from homology"/>
<name>YQGF_ECOBW</name>
<dbReference type="EC" id="3.1.-.-" evidence="1"/>
<dbReference type="EMBL" id="CP001396">
    <property type="protein sequence ID" value="ACR64454.1"/>
    <property type="molecule type" value="Genomic_DNA"/>
</dbReference>
<dbReference type="SMR" id="C5A0L8"/>
<dbReference type="KEGG" id="ebw:BWG_2671"/>
<dbReference type="HOGENOM" id="CLU_098240_3_0_6"/>
<dbReference type="GO" id="GO:0005829">
    <property type="term" value="C:cytosol"/>
    <property type="evidence" value="ECO:0007669"/>
    <property type="project" value="TreeGrafter"/>
</dbReference>
<dbReference type="GO" id="GO:0004518">
    <property type="term" value="F:nuclease activity"/>
    <property type="evidence" value="ECO:0007669"/>
    <property type="project" value="UniProtKB-KW"/>
</dbReference>
<dbReference type="GO" id="GO:0000967">
    <property type="term" value="P:rRNA 5'-end processing"/>
    <property type="evidence" value="ECO:0007669"/>
    <property type="project" value="UniProtKB-UniRule"/>
</dbReference>
<dbReference type="CDD" id="cd16964">
    <property type="entry name" value="YqgF"/>
    <property type="match status" value="1"/>
</dbReference>
<dbReference type="FunFam" id="3.30.420.140:FF:000002">
    <property type="entry name" value="Putative pre-16S rRNA nuclease"/>
    <property type="match status" value="1"/>
</dbReference>
<dbReference type="Gene3D" id="3.30.420.140">
    <property type="entry name" value="YqgF/RNase H-like domain"/>
    <property type="match status" value="1"/>
</dbReference>
<dbReference type="HAMAP" id="MF_00651">
    <property type="entry name" value="Nuclease_YqgF"/>
    <property type="match status" value="1"/>
</dbReference>
<dbReference type="InterPro" id="IPR012337">
    <property type="entry name" value="RNaseH-like_sf"/>
</dbReference>
<dbReference type="InterPro" id="IPR005227">
    <property type="entry name" value="YqgF"/>
</dbReference>
<dbReference type="InterPro" id="IPR006641">
    <property type="entry name" value="YqgF/RNaseH-like_dom"/>
</dbReference>
<dbReference type="InterPro" id="IPR037027">
    <property type="entry name" value="YqgF/RNaseH-like_dom_sf"/>
</dbReference>
<dbReference type="NCBIfam" id="TIGR00250">
    <property type="entry name" value="RNAse_H_YqgF"/>
    <property type="match status" value="1"/>
</dbReference>
<dbReference type="PANTHER" id="PTHR33317">
    <property type="entry name" value="POLYNUCLEOTIDYL TRANSFERASE, RIBONUCLEASE H-LIKE SUPERFAMILY PROTEIN"/>
    <property type="match status" value="1"/>
</dbReference>
<dbReference type="PANTHER" id="PTHR33317:SF4">
    <property type="entry name" value="POLYNUCLEOTIDYL TRANSFERASE, RIBONUCLEASE H-LIKE SUPERFAMILY PROTEIN"/>
    <property type="match status" value="1"/>
</dbReference>
<dbReference type="Pfam" id="PF03652">
    <property type="entry name" value="RuvX"/>
    <property type="match status" value="1"/>
</dbReference>
<dbReference type="SMART" id="SM00732">
    <property type="entry name" value="YqgFc"/>
    <property type="match status" value="1"/>
</dbReference>
<dbReference type="SUPFAM" id="SSF53098">
    <property type="entry name" value="Ribonuclease H-like"/>
    <property type="match status" value="1"/>
</dbReference>
<keyword id="KW-0963">Cytoplasm</keyword>
<keyword id="KW-0378">Hydrolase</keyword>
<keyword id="KW-0540">Nuclease</keyword>
<keyword id="KW-0690">Ribosome biogenesis</keyword>
<feature type="chain" id="PRO_1000212409" description="Putative pre-16S rRNA nuclease">
    <location>
        <begin position="1"/>
        <end position="138"/>
    </location>
</feature>
<accession>C5A0L8</accession>
<evidence type="ECO:0000255" key="1">
    <source>
        <dbReference type="HAMAP-Rule" id="MF_00651"/>
    </source>
</evidence>
<reference key="1">
    <citation type="journal article" date="2009" name="J. Bacteriol.">
        <title>Genomic sequencing reveals regulatory mutations and recombinational events in the widely used MC4100 lineage of Escherichia coli K-12.</title>
        <authorList>
            <person name="Ferenci T."/>
            <person name="Zhou Z."/>
            <person name="Betteridge T."/>
            <person name="Ren Y."/>
            <person name="Liu Y."/>
            <person name="Feng L."/>
            <person name="Reeves P.R."/>
            <person name="Wang L."/>
        </authorList>
    </citation>
    <scope>NUCLEOTIDE SEQUENCE [LARGE SCALE GENOMIC DNA]</scope>
    <source>
        <strain>K12 / MC4100 / BW2952</strain>
    </source>
</reference>
<protein>
    <recommendedName>
        <fullName evidence="1">Putative pre-16S rRNA nuclease</fullName>
        <ecNumber evidence="1">3.1.-.-</ecNumber>
    </recommendedName>
</protein>